<proteinExistence type="evidence at protein level"/>
<comment type="function">
    <text evidence="2 6 7">Direct ligand for the ERBB tyrosine kinase receptors. The multiple isoforms perform diverse functions: cysteine-rich domain containing isoforms (isoform 2-isoform 4) probably regulate the expression of nicotinic acetylcholine receptors at developing interneuronal synapses. Isoform Ig-NRG is required for the initial induction and/or maintenance of the mature levels of acetylcholine receptors at neuromuscular synapses (PubMed:8453670, PubMed:9491987). Binds to ERBB3 and integrins to form a complex which is essential for NRG1-ERBB signaling (By similarity).</text>
</comment>
<comment type="subcellular location">
    <molecule>Pro-neuregulin-1, membrane-bound isoform</molecule>
    <subcellularLocation>
        <location evidence="1">Cell membrane</location>
        <topology evidence="1">Single-pass type I membrane protein</topology>
    </subcellularLocation>
    <text evidence="1">Does not seem to be active.</text>
</comment>
<comment type="subcellular location">
    <molecule>Neuregulin-1</molecule>
    <subcellularLocation>
        <location evidence="1">Secreted</location>
    </subcellularLocation>
</comment>
<comment type="alternative products">
    <event type="alternative splicing"/>
    <isoform>
        <id>Q05199-1</id>
        <name>1</name>
        <name>ARIA</name>
        <name>Ig-NRG</name>
        <sequence type="displayed"/>
    </isoform>
    <isoform>
        <id>Q05199-2</id>
        <name>2</name>
        <name>CRD-NRG-BETA1A</name>
        <sequence type="described" ref="VSP_003445"/>
    </isoform>
    <isoform>
        <id>Q05199-3</id>
        <name>3</name>
        <name>CRD-NRG-BETA2A</name>
        <sequence type="described" ref="VSP_003445 VSP_003446"/>
    </isoform>
    <isoform>
        <id>Q05199-4</id>
        <name>4</name>
        <name>CRD-NRG-BETA2B</name>
        <sequence type="described" ref="VSP_003445 VSP_003446 VSP_003447 VSP_003448"/>
    </isoform>
    <text>Additional isoforms seem to exist.</text>
</comment>
<comment type="developmental stage">
    <text>Isoform 2-isoform 4 are detected at embryonic day 4 (ED4) in both visceral and somatic motor neurons of spinal cord and is highest at ED6. Isoform 1 is not expressed until ED 6 in spinal cord. At ED 11 both isoforms display comparable levels.</text>
</comment>
<comment type="domain">
    <text evidence="1">The cytoplasmic domain may be involved in the regulation of trafficking and proteolytic processing. Regulation of the proteolytic processing involves initial intracellular domain dimerization (By similarity).</text>
</comment>
<comment type="domain">
    <text>ERBB receptor binding is elicited entirely by the EGF-like domain.</text>
</comment>
<comment type="PTM">
    <text>Proteolytic cleavage close to the plasma membrane on the external face leads to the release of the soluble growth factor form.</text>
</comment>
<comment type="PTM">
    <text evidence="1">Extensive glycosylation precedes the proteolytic cleavage.</text>
</comment>
<comment type="miscellaneous">
    <molecule>Isoform 1</molecule>
    <text>Contains an Ig-like domain.</text>
</comment>
<comment type="miscellaneous">
    <molecule>Isoform 2</molecule>
    <text evidence="9">The EGF-like domain is replaced by a cysteine-rich domain (CRD).</text>
</comment>
<comment type="miscellaneous">
    <molecule>Isoform 3</molecule>
    <text evidence="9">The EGF-like domain is replaced by a cysteine-rich domain (CRD).</text>
</comment>
<comment type="miscellaneous">
    <molecule>Isoform 4</molecule>
    <text evidence="9">The EGF-like domain is replaced by a cysteine-rich domain (CRD).</text>
</comment>
<comment type="similarity">
    <text evidence="9">Belongs to the neuregulin family.</text>
</comment>
<feature type="chain" id="PRO_0000019468" description="Pro-neuregulin-1, membrane-bound isoform">
    <location>
        <begin position="1"/>
        <end position="602"/>
    </location>
</feature>
<feature type="chain" id="PRO_0000019469" description="Neuregulin-1">
    <location>
        <begin position="1"/>
        <end position="205"/>
    </location>
</feature>
<feature type="topological domain" description="Extracellular" evidence="3">
    <location>
        <begin position="1"/>
        <end position="206"/>
    </location>
</feature>
<feature type="transmembrane region" description="Helical; Note=Internal signal sequence" evidence="3">
    <location>
        <begin position="207"/>
        <end position="229"/>
    </location>
</feature>
<feature type="topological domain" description="Cytoplasmic" evidence="3">
    <location>
        <begin position="230"/>
        <end position="602"/>
    </location>
</feature>
<feature type="domain" description="Ig-like C2-type">
    <location>
        <begin position="29"/>
        <end position="123"/>
    </location>
</feature>
<feature type="domain" description="EGF-like" evidence="4">
    <location>
        <begin position="137"/>
        <end position="181"/>
    </location>
</feature>
<feature type="region of interest" description="Disordered" evidence="5">
    <location>
        <begin position="293"/>
        <end position="366"/>
    </location>
</feature>
<feature type="region of interest" description="Disordered" evidence="5">
    <location>
        <begin position="391"/>
        <end position="421"/>
    </location>
</feature>
<feature type="region of interest" description="Disordered" evidence="5">
    <location>
        <begin position="460"/>
        <end position="479"/>
    </location>
</feature>
<feature type="region of interest" description="Disordered" evidence="5">
    <location>
        <begin position="486"/>
        <end position="553"/>
    </location>
</feature>
<feature type="compositionally biased region" description="Low complexity" evidence="5">
    <location>
        <begin position="294"/>
        <end position="314"/>
    </location>
</feature>
<feature type="compositionally biased region" description="Polar residues" evidence="5">
    <location>
        <begin position="315"/>
        <end position="324"/>
    </location>
</feature>
<feature type="compositionally biased region" description="Low complexity" evidence="5">
    <location>
        <begin position="325"/>
        <end position="341"/>
    </location>
</feature>
<feature type="compositionally biased region" description="Polar residues" evidence="5">
    <location>
        <begin position="460"/>
        <end position="474"/>
    </location>
</feature>
<feature type="compositionally biased region" description="Basic residues" evidence="5">
    <location>
        <begin position="504"/>
        <end position="514"/>
    </location>
</feature>
<feature type="compositionally biased region" description="Low complexity" evidence="5">
    <location>
        <begin position="527"/>
        <end position="536"/>
    </location>
</feature>
<feature type="glycosylation site" description="N-linked (GlcNAc...) asparagine" evidence="3">
    <location>
        <position position="21"/>
    </location>
</feature>
<feature type="glycosylation site" description="N-linked (GlcNAc...) asparagine" evidence="3">
    <location>
        <position position="113"/>
    </location>
</feature>
<feature type="glycosylation site" description="N-linked (GlcNAc...) asparagine" evidence="3">
    <location>
        <position position="126"/>
    </location>
</feature>
<feature type="disulfide bond" evidence="1">
    <location>
        <begin position="49"/>
        <end position="105"/>
    </location>
</feature>
<feature type="disulfide bond" evidence="1">
    <location>
        <begin position="141"/>
        <end position="155"/>
    </location>
</feature>
<feature type="disulfide bond" evidence="1">
    <location>
        <begin position="149"/>
        <end position="169"/>
    </location>
</feature>
<feature type="disulfide bond" evidence="1">
    <location>
        <begin position="171"/>
        <end position="180"/>
    </location>
</feature>
<feature type="splice variant" id="VSP_003445" description="In isoform 2, isoform 3 and isoform 4." evidence="8">
    <original>MWATSEGPLQYSLAPTQTDVNSSYNTVPPKLKEMKNQEVAVGQKLVLRCETTSEYPALRFKWLKNGKEITKKNRPENVKIPKKQKKYSELHIYRATLADAGEYACRVSSKLGNDSTKASVIITDTNA</original>
    <variation>MSEVGTETFPSPSAQLSPDASLGGLPAEENMPGPHREDSRVPGVAGLASTCCVCLEAERLKGCLNSEKICIAPILACLLSLCLCIAGLKWVFVDKIFEYDSPTHLDPGRIGQDPRSTVDPTALSAWVPSEVYASPFPIPSLESKAEVTVQTDSSLVPSRPFLQPSLYNRILDVGLWSSATPSLSPSSLEPTTASQAQATETNLQTAPKLS</variation>
    <location>
        <begin position="1"/>
        <end position="127"/>
    </location>
</feature>
<feature type="splice variant" id="VSP_003446" description="In isoform 3 and isoform 4." evidence="8">
    <location>
        <begin position="191"/>
        <end position="198"/>
    </location>
</feature>
<feature type="splice variant" id="VSP_003447" description="In isoform 4." evidence="8">
    <original>VSAMTTPARMSPVDFHTP</original>
    <variation>HTPPTSLLLAGKVSLRVS</variation>
    <location>
        <begin position="388"/>
        <end position="405"/>
    </location>
</feature>
<feature type="splice variant" id="VSP_003448" description="In isoform 4." evidence="8">
    <location>
        <begin position="406"/>
        <end position="602"/>
    </location>
</feature>
<accession>Q05199</accession>
<accession>O73750</accession>
<accession>O73751</accession>
<accession>O73752</accession>
<gene>
    <name type="primary">NRG1</name>
    <name type="synonym">ARIA</name>
</gene>
<sequence>MWATSEGPLQYSLAPTQTDVNSSYNTVPPKLKEMKNQEVAVGQKLVLRCETTSEYPALRFKWLKNGKEITKKNRPENVKIPKKQKKYSELHIYRATLADAGEYACRVSSKLGNDSTKASVIITDTNATSTSTTGTSHLTKCDIKQKAFCVNGGECYMVKDLPNPPRYLCRCPNEFTGDRCQNYVMASFYKHLGIEFMEAEELYQKRVLTITGICIALLVVGIMCVVAYCKTKKQRKKLHDRLRQSLRSERNNVMNMANGPHHPNPPPDNVQLVNQYVSKNIISSERVVERETETSFSTSHYTSTTHHSMTVTQTPSHSWSNGHTESILSESHSVLVSSSVENSRHTSPTGPRGRLNGIGGPREGNSFLRHARETPDSYRDSPHSERYVSAMTTPARMSPVDFHTPTSPKSPPSEMSPPVSSLTISIPSVAVSPFMDEERPLLLVTPPRLREKYDNHLQQFNSFHNNPTHESNSLPPSPLRIVEDEEYETTQEYEPAQEPPKKLTNSRRVKRTKPNGHISSRVEVDSDTSSQSTSSESETEDERIGEDTPFLSIQNPMATSLEPAAAYRLAENRTNPANRFSTPEELQARLSSVIANQDPIAV</sequence>
<keyword id="KW-0025">Alternative splicing</keyword>
<keyword id="KW-1003">Cell membrane</keyword>
<keyword id="KW-0903">Direct protein sequencing</keyword>
<keyword id="KW-1015">Disulfide bond</keyword>
<keyword id="KW-0245">EGF-like domain</keyword>
<keyword id="KW-0325">Glycoprotein</keyword>
<keyword id="KW-0339">Growth factor</keyword>
<keyword id="KW-0393">Immunoglobulin domain</keyword>
<keyword id="KW-0472">Membrane</keyword>
<keyword id="KW-1185">Reference proteome</keyword>
<keyword id="KW-0964">Secreted</keyword>
<keyword id="KW-0812">Transmembrane</keyword>
<keyword id="KW-1133">Transmembrane helix</keyword>
<evidence type="ECO:0000250" key="1"/>
<evidence type="ECO:0000250" key="2">
    <source>
        <dbReference type="UniProtKB" id="Q02297"/>
    </source>
</evidence>
<evidence type="ECO:0000255" key="3"/>
<evidence type="ECO:0000255" key="4">
    <source>
        <dbReference type="PROSITE-ProRule" id="PRU00076"/>
    </source>
</evidence>
<evidence type="ECO:0000256" key="5">
    <source>
        <dbReference type="SAM" id="MobiDB-lite"/>
    </source>
</evidence>
<evidence type="ECO:0000269" key="6">
    <source>
    </source>
</evidence>
<evidence type="ECO:0000269" key="7">
    <source>
    </source>
</evidence>
<evidence type="ECO:0000303" key="8">
    <source>
    </source>
</evidence>
<evidence type="ECO:0000305" key="9"/>
<protein>
    <recommendedName>
        <fullName>Pro-neuregulin-1, membrane-bound isoform</fullName>
        <shortName>Pro-NRG1</shortName>
    </recommendedName>
    <component>
        <recommendedName>
            <fullName>Neuregulin-1</fullName>
        </recommendedName>
        <alternativeName>
            <fullName>Acetylcholine receptor-inducing activity</fullName>
            <shortName>ARIA</shortName>
        </alternativeName>
    </component>
</protein>
<name>NRG1_CHICK</name>
<dbReference type="EMBL" id="L11264">
    <property type="protein sequence ID" value="AAA49037.1"/>
    <property type="molecule type" value="mRNA"/>
</dbReference>
<dbReference type="EMBL" id="AF045654">
    <property type="protein sequence ID" value="AAC05670.1"/>
    <property type="molecule type" value="mRNA"/>
</dbReference>
<dbReference type="EMBL" id="AF045655">
    <property type="protein sequence ID" value="AAC05671.1"/>
    <property type="molecule type" value="mRNA"/>
</dbReference>
<dbReference type="EMBL" id="AF045656">
    <property type="protein sequence ID" value="AAC05672.1"/>
    <property type="molecule type" value="mRNA"/>
</dbReference>
<dbReference type="PIR" id="A45769">
    <property type="entry name" value="A45769"/>
</dbReference>
<dbReference type="RefSeq" id="NP_989448.1">
    <molecule id="Q05199-2"/>
    <property type="nucleotide sequence ID" value="NM_204117.2"/>
</dbReference>
<dbReference type="RefSeq" id="XP_015135889.2">
    <molecule id="Q05199-3"/>
    <property type="nucleotide sequence ID" value="XM_015280403.4"/>
</dbReference>
<dbReference type="RefSeq" id="XP_046790577.1">
    <molecule id="Q05199-3"/>
    <property type="nucleotide sequence ID" value="XM_046934621.1"/>
</dbReference>
<dbReference type="SMR" id="Q05199"/>
<dbReference type="FunCoup" id="Q05199">
    <property type="interactions" value="139"/>
</dbReference>
<dbReference type="IntAct" id="Q05199">
    <property type="interactions" value="1"/>
</dbReference>
<dbReference type="STRING" id="9031.ENSGALP00000024830"/>
<dbReference type="GlyCosmos" id="Q05199">
    <property type="glycosylation" value="3 sites, No reported glycans"/>
</dbReference>
<dbReference type="GlyGen" id="Q05199">
    <property type="glycosylation" value="3 sites"/>
</dbReference>
<dbReference type="PaxDb" id="9031-ENSGALP00000024830"/>
<dbReference type="Ensembl" id="ENSGALT00010033374.1">
    <molecule id="Q05199-3"/>
    <property type="protein sequence ID" value="ENSGALP00010019688.1"/>
    <property type="gene ID" value="ENSGALG00010013914.1"/>
</dbReference>
<dbReference type="Ensembl" id="ENSGALT00010033386.1">
    <molecule id="Q05199-2"/>
    <property type="protein sequence ID" value="ENSGALP00010019695.1"/>
    <property type="gene ID" value="ENSGALG00010013914.1"/>
</dbReference>
<dbReference type="GeneID" id="373906"/>
<dbReference type="KEGG" id="gga:373906"/>
<dbReference type="CTD" id="3084"/>
<dbReference type="VEuPathDB" id="HostDB:geneid_373906"/>
<dbReference type="eggNOG" id="ENOG502QRUM">
    <property type="taxonomic scope" value="Eukaryota"/>
</dbReference>
<dbReference type="GeneTree" id="ENSGT00940000157326"/>
<dbReference type="HOGENOM" id="CLU_023628_1_0_1"/>
<dbReference type="InParanoid" id="Q05199"/>
<dbReference type="OrthoDB" id="8747558at2759"/>
<dbReference type="PhylomeDB" id="Q05199"/>
<dbReference type="PRO" id="PR:Q05199"/>
<dbReference type="Proteomes" id="UP000000539">
    <property type="component" value="Chromosome Z"/>
</dbReference>
<dbReference type="GO" id="GO:0005615">
    <property type="term" value="C:extracellular space"/>
    <property type="evidence" value="ECO:0000318"/>
    <property type="project" value="GO_Central"/>
</dbReference>
<dbReference type="GO" id="GO:0098978">
    <property type="term" value="C:glutamatergic synapse"/>
    <property type="evidence" value="ECO:0007669"/>
    <property type="project" value="Ensembl"/>
</dbReference>
<dbReference type="GO" id="GO:0005654">
    <property type="term" value="C:nucleoplasm"/>
    <property type="evidence" value="ECO:0007669"/>
    <property type="project" value="Ensembl"/>
</dbReference>
<dbReference type="GO" id="GO:0005886">
    <property type="term" value="C:plasma membrane"/>
    <property type="evidence" value="ECO:0007669"/>
    <property type="project" value="UniProtKB-SubCell"/>
</dbReference>
<dbReference type="GO" id="GO:0045499">
    <property type="term" value="F:chemorepellent activity"/>
    <property type="evidence" value="ECO:0000318"/>
    <property type="project" value="GO_Central"/>
</dbReference>
<dbReference type="GO" id="GO:0043125">
    <property type="term" value="F:ErbB-3 class receptor binding"/>
    <property type="evidence" value="ECO:0000250"/>
    <property type="project" value="UniProtKB"/>
</dbReference>
<dbReference type="GO" id="GO:0008083">
    <property type="term" value="F:growth factor activity"/>
    <property type="evidence" value="ECO:0007669"/>
    <property type="project" value="UniProtKB-KW"/>
</dbReference>
<dbReference type="GO" id="GO:0005178">
    <property type="term" value="F:integrin binding"/>
    <property type="evidence" value="ECO:0000250"/>
    <property type="project" value="UniProtKB"/>
</dbReference>
<dbReference type="GO" id="GO:0030296">
    <property type="term" value="F:protein tyrosine kinase activator activity"/>
    <property type="evidence" value="ECO:0000318"/>
    <property type="project" value="GO_Central"/>
</dbReference>
<dbReference type="GO" id="GO:0003712">
    <property type="term" value="F:transcription coregulator activity"/>
    <property type="evidence" value="ECO:0007669"/>
    <property type="project" value="Ensembl"/>
</dbReference>
<dbReference type="GO" id="GO:0007420">
    <property type="term" value="P:brain development"/>
    <property type="evidence" value="ECO:0000318"/>
    <property type="project" value="GO_Central"/>
</dbReference>
<dbReference type="GO" id="GO:0060379">
    <property type="term" value="P:cardiac muscle cell myoblast differentiation"/>
    <property type="evidence" value="ECO:0007669"/>
    <property type="project" value="Ensembl"/>
</dbReference>
<dbReference type="GO" id="GO:0030154">
    <property type="term" value="P:cell differentiation"/>
    <property type="evidence" value="ECO:0000318"/>
    <property type="project" value="GO_Central"/>
</dbReference>
<dbReference type="GO" id="GO:0060956">
    <property type="term" value="P:endocardial cell differentiation"/>
    <property type="evidence" value="ECO:0007669"/>
    <property type="project" value="Ensembl"/>
</dbReference>
<dbReference type="GO" id="GO:0038127">
    <property type="term" value="P:ERBB signaling pathway"/>
    <property type="evidence" value="ECO:0000250"/>
    <property type="project" value="UniProtKB"/>
</dbReference>
<dbReference type="GO" id="GO:0038133">
    <property type="term" value="P:ERBB2-ERBB3 signaling pathway"/>
    <property type="evidence" value="ECO:0000318"/>
    <property type="project" value="GO_Central"/>
</dbReference>
<dbReference type="GO" id="GO:0038135">
    <property type="term" value="P:ERBB2-ERBB4 signaling pathway"/>
    <property type="evidence" value="ECO:0007669"/>
    <property type="project" value="Ensembl"/>
</dbReference>
<dbReference type="GO" id="GO:0038130">
    <property type="term" value="P:ERBB4 signaling pathway"/>
    <property type="evidence" value="ECO:0000318"/>
    <property type="project" value="GO_Central"/>
</dbReference>
<dbReference type="GO" id="GO:0038138">
    <property type="term" value="P:ERBB4-ERBB4 signaling pathway"/>
    <property type="evidence" value="ECO:0007669"/>
    <property type="project" value="Ensembl"/>
</dbReference>
<dbReference type="GO" id="GO:0035556">
    <property type="term" value="P:intracellular signal transduction"/>
    <property type="evidence" value="ECO:0000318"/>
    <property type="project" value="GO_Central"/>
</dbReference>
<dbReference type="GO" id="GO:0045892">
    <property type="term" value="P:negative regulation of DNA-templated transcription"/>
    <property type="evidence" value="ECO:0007669"/>
    <property type="project" value="Ensembl"/>
</dbReference>
<dbReference type="GO" id="GO:0051048">
    <property type="term" value="P:negative regulation of secretion"/>
    <property type="evidence" value="ECO:0007669"/>
    <property type="project" value="Ensembl"/>
</dbReference>
<dbReference type="GO" id="GO:0007422">
    <property type="term" value="P:peripheral nervous system development"/>
    <property type="evidence" value="ECO:0000318"/>
    <property type="project" value="GO_Central"/>
</dbReference>
<dbReference type="GO" id="GO:0008284">
    <property type="term" value="P:positive regulation of cell population proliferation"/>
    <property type="evidence" value="ECO:0007669"/>
    <property type="project" value="Ensembl"/>
</dbReference>
<dbReference type="GO" id="GO:0070374">
    <property type="term" value="P:positive regulation of ERK1 and ERK2 cascade"/>
    <property type="evidence" value="ECO:0007669"/>
    <property type="project" value="Ensembl"/>
</dbReference>
<dbReference type="GO" id="GO:0031334">
    <property type="term" value="P:positive regulation of protein-containing complex assembly"/>
    <property type="evidence" value="ECO:0007669"/>
    <property type="project" value="Ensembl"/>
</dbReference>
<dbReference type="GO" id="GO:0099149">
    <property type="term" value="P:regulation of postsynaptic neurotransmitter receptor internalization"/>
    <property type="evidence" value="ECO:0007669"/>
    <property type="project" value="Ensembl"/>
</dbReference>
<dbReference type="GO" id="GO:0003222">
    <property type="term" value="P:ventricular trabecula myocardium morphogenesis"/>
    <property type="evidence" value="ECO:0007669"/>
    <property type="project" value="Ensembl"/>
</dbReference>
<dbReference type="CDD" id="cd00053">
    <property type="entry name" value="EGF"/>
    <property type="match status" value="1"/>
</dbReference>
<dbReference type="CDD" id="cd05895">
    <property type="entry name" value="Ig_Pro_neuregulin-1"/>
    <property type="match status" value="1"/>
</dbReference>
<dbReference type="FunFam" id="2.60.40.10:FF:000263">
    <property type="entry name" value="Pro-neuregulin-1, membrane-bound isoform"/>
    <property type="match status" value="1"/>
</dbReference>
<dbReference type="FunFam" id="2.10.25.10:FF:000073">
    <property type="entry name" value="Pro-neuregulin-1, membrane-bound isoform A"/>
    <property type="match status" value="1"/>
</dbReference>
<dbReference type="Gene3D" id="2.60.40.10">
    <property type="entry name" value="Immunoglobulins"/>
    <property type="match status" value="1"/>
</dbReference>
<dbReference type="Gene3D" id="2.10.25.10">
    <property type="entry name" value="Laminin"/>
    <property type="match status" value="1"/>
</dbReference>
<dbReference type="InterPro" id="IPR000742">
    <property type="entry name" value="EGF-like_dom"/>
</dbReference>
<dbReference type="InterPro" id="IPR007110">
    <property type="entry name" value="Ig-like_dom"/>
</dbReference>
<dbReference type="InterPro" id="IPR036179">
    <property type="entry name" value="Ig-like_dom_sf"/>
</dbReference>
<dbReference type="InterPro" id="IPR013783">
    <property type="entry name" value="Ig-like_fold"/>
</dbReference>
<dbReference type="InterPro" id="IPR013098">
    <property type="entry name" value="Ig_I-set"/>
</dbReference>
<dbReference type="InterPro" id="IPR003599">
    <property type="entry name" value="Ig_sub"/>
</dbReference>
<dbReference type="InterPro" id="IPR003598">
    <property type="entry name" value="Ig_sub2"/>
</dbReference>
<dbReference type="InterPro" id="IPR040180">
    <property type="entry name" value="Neuregulin"/>
</dbReference>
<dbReference type="InterPro" id="IPR002154">
    <property type="entry name" value="Neuregulin_C"/>
</dbReference>
<dbReference type="InterPro" id="IPR018250">
    <property type="entry name" value="NRG1"/>
</dbReference>
<dbReference type="PANTHER" id="PTHR11100">
    <property type="entry name" value="HEREGULIN-NEUREGULIN FAMILY MEMBER"/>
    <property type="match status" value="1"/>
</dbReference>
<dbReference type="PANTHER" id="PTHR11100:SF7">
    <property type="entry name" value="PRO-NEUREGULIN-1, MEMBRANE-BOUND ISOFORM"/>
    <property type="match status" value="1"/>
</dbReference>
<dbReference type="Pfam" id="PF07679">
    <property type="entry name" value="I-set"/>
    <property type="match status" value="1"/>
</dbReference>
<dbReference type="Pfam" id="PF02158">
    <property type="entry name" value="Neuregulin"/>
    <property type="match status" value="1"/>
</dbReference>
<dbReference type="PRINTS" id="PR01089">
    <property type="entry name" value="NEUREGULIN"/>
</dbReference>
<dbReference type="SMART" id="SM00181">
    <property type="entry name" value="EGF"/>
    <property type="match status" value="1"/>
</dbReference>
<dbReference type="SMART" id="SM00409">
    <property type="entry name" value="IG"/>
    <property type="match status" value="1"/>
</dbReference>
<dbReference type="SMART" id="SM00408">
    <property type="entry name" value="IGc2"/>
    <property type="match status" value="1"/>
</dbReference>
<dbReference type="SUPFAM" id="SSF57196">
    <property type="entry name" value="EGF/Laminin"/>
    <property type="match status" value="1"/>
</dbReference>
<dbReference type="SUPFAM" id="SSF48726">
    <property type="entry name" value="Immunoglobulin"/>
    <property type="match status" value="1"/>
</dbReference>
<dbReference type="PROSITE" id="PS00022">
    <property type="entry name" value="EGF_1"/>
    <property type="match status" value="1"/>
</dbReference>
<dbReference type="PROSITE" id="PS50026">
    <property type="entry name" value="EGF_3"/>
    <property type="match status" value="1"/>
</dbReference>
<dbReference type="PROSITE" id="PS50835">
    <property type="entry name" value="IG_LIKE"/>
    <property type="match status" value="1"/>
</dbReference>
<organism>
    <name type="scientific">Gallus gallus</name>
    <name type="common">Chicken</name>
    <dbReference type="NCBI Taxonomy" id="9031"/>
    <lineage>
        <taxon>Eukaryota</taxon>
        <taxon>Metazoa</taxon>
        <taxon>Chordata</taxon>
        <taxon>Craniata</taxon>
        <taxon>Vertebrata</taxon>
        <taxon>Euteleostomi</taxon>
        <taxon>Archelosauria</taxon>
        <taxon>Archosauria</taxon>
        <taxon>Dinosauria</taxon>
        <taxon>Saurischia</taxon>
        <taxon>Theropoda</taxon>
        <taxon>Coelurosauria</taxon>
        <taxon>Aves</taxon>
        <taxon>Neognathae</taxon>
        <taxon>Galloanserae</taxon>
        <taxon>Galliformes</taxon>
        <taxon>Phasianidae</taxon>
        <taxon>Phasianinae</taxon>
        <taxon>Gallus</taxon>
    </lineage>
</organism>
<reference key="1">
    <citation type="journal article" date="1993" name="Cell">
        <title>ARIA, a protein that stimulates acetylcholine receptor synthesis, is a member of the neu ligand family.</title>
        <authorList>
            <person name="Falls D.L."/>
            <person name="Rosen K.M."/>
            <person name="Corfas G."/>
            <person name="Lane W.S."/>
            <person name="Fischbach G.D."/>
        </authorList>
    </citation>
    <scope>NUCLEOTIDE SEQUENCE [MRNA] (ISOFORM 1)</scope>
    <scope>PARTIAL PROTEIN SEQUENCE</scope>
    <scope>FUNCTION</scope>
    <source>
        <strain>White leghorn</strain>
        <tissue>Brain</tissue>
    </source>
</reference>
<reference key="2">
    <citation type="journal article" date="1998" name="Neuron">
        <title>A cysteine-rich isoform of neuregulin controls the level of expression of neuronal nicotinic receptor channels during synaptogenesis.</title>
        <authorList>
            <person name="Yang X."/>
            <person name="Kuo Y."/>
            <person name="Devay P."/>
            <person name="Yu C."/>
            <person name="Role L."/>
        </authorList>
    </citation>
    <scope>NUCLEOTIDE SEQUENCE [MRNA] (ISOFORMS 2; 3 AND 4)</scope>
    <scope>FUNCTION</scope>
    <source>
        <tissue>Brain</tissue>
        <tissue>Spinal cord</tissue>
    </source>
</reference>